<keyword id="KW-0030">Aminoacyl-tRNA synthetase</keyword>
<keyword id="KW-0067">ATP-binding</keyword>
<keyword id="KW-0963">Cytoplasm</keyword>
<keyword id="KW-0436">Ligase</keyword>
<keyword id="KW-0460">Magnesium</keyword>
<keyword id="KW-0479">Metal-binding</keyword>
<keyword id="KW-0547">Nucleotide-binding</keyword>
<keyword id="KW-0648">Protein biosynthesis</keyword>
<sequence length="327" mass="36785">MSHLAELVANAAAAINQASDVAALDNVRVEYLGKKGHLTLQMMTLRDLPPEERPAAGAVINAAKEQVQQALNARKAELESAALNARLAAETIDISLPGRRIENGGLHPVTRTIDRIESFFGELGFTVATGPEIEDDYHNFDALNIPGHHPARADHDTFWFDATRLLRTQTSGVQIRTMKAQQPPIRIIAPGRVYRNDYDQTHTPMFHQMEGLIVDTNISFTNLKGTLHDFLRNFFEEDLQIRFRPSYFPFTEPSAEVDVMGKNGKWLEVLGCGMVHPNVLRNVGIDPEIYSGFAFGMGMERLTMLRYGVTDLRSFFENDLRFLKQFK</sequence>
<name>SYFA_SALCH</name>
<organism>
    <name type="scientific">Salmonella choleraesuis (strain SC-B67)</name>
    <dbReference type="NCBI Taxonomy" id="321314"/>
    <lineage>
        <taxon>Bacteria</taxon>
        <taxon>Pseudomonadati</taxon>
        <taxon>Pseudomonadota</taxon>
        <taxon>Gammaproteobacteria</taxon>
        <taxon>Enterobacterales</taxon>
        <taxon>Enterobacteriaceae</taxon>
        <taxon>Salmonella</taxon>
    </lineage>
</organism>
<dbReference type="EC" id="6.1.1.20" evidence="1"/>
<dbReference type="EMBL" id="AE017220">
    <property type="protein sequence ID" value="AAX65262.1"/>
    <property type="molecule type" value="Genomic_DNA"/>
</dbReference>
<dbReference type="RefSeq" id="WP_001539878.1">
    <property type="nucleotide sequence ID" value="NC_006905.1"/>
</dbReference>
<dbReference type="SMR" id="Q57PU9"/>
<dbReference type="KEGG" id="sec:SCH_1356"/>
<dbReference type="HOGENOM" id="CLU_025086_0_1_6"/>
<dbReference type="Proteomes" id="UP000000538">
    <property type="component" value="Chromosome"/>
</dbReference>
<dbReference type="GO" id="GO:0005737">
    <property type="term" value="C:cytoplasm"/>
    <property type="evidence" value="ECO:0007669"/>
    <property type="project" value="UniProtKB-SubCell"/>
</dbReference>
<dbReference type="GO" id="GO:0005524">
    <property type="term" value="F:ATP binding"/>
    <property type="evidence" value="ECO:0007669"/>
    <property type="project" value="UniProtKB-UniRule"/>
</dbReference>
<dbReference type="GO" id="GO:0000287">
    <property type="term" value="F:magnesium ion binding"/>
    <property type="evidence" value="ECO:0007669"/>
    <property type="project" value="UniProtKB-UniRule"/>
</dbReference>
<dbReference type="GO" id="GO:0004826">
    <property type="term" value="F:phenylalanine-tRNA ligase activity"/>
    <property type="evidence" value="ECO:0007669"/>
    <property type="project" value="UniProtKB-UniRule"/>
</dbReference>
<dbReference type="GO" id="GO:0000049">
    <property type="term" value="F:tRNA binding"/>
    <property type="evidence" value="ECO:0007669"/>
    <property type="project" value="InterPro"/>
</dbReference>
<dbReference type="GO" id="GO:0006432">
    <property type="term" value="P:phenylalanyl-tRNA aminoacylation"/>
    <property type="evidence" value="ECO:0007669"/>
    <property type="project" value="UniProtKB-UniRule"/>
</dbReference>
<dbReference type="CDD" id="cd00496">
    <property type="entry name" value="PheRS_alpha_core"/>
    <property type="match status" value="1"/>
</dbReference>
<dbReference type="FunFam" id="3.30.930.10:FF:000003">
    <property type="entry name" value="Phenylalanine--tRNA ligase alpha subunit"/>
    <property type="match status" value="1"/>
</dbReference>
<dbReference type="Gene3D" id="3.30.930.10">
    <property type="entry name" value="Bira Bifunctional Protein, Domain 2"/>
    <property type="match status" value="1"/>
</dbReference>
<dbReference type="HAMAP" id="MF_00281">
    <property type="entry name" value="Phe_tRNA_synth_alpha1"/>
    <property type="match status" value="1"/>
</dbReference>
<dbReference type="InterPro" id="IPR006195">
    <property type="entry name" value="aa-tRNA-synth_II"/>
</dbReference>
<dbReference type="InterPro" id="IPR045864">
    <property type="entry name" value="aa-tRNA-synth_II/BPL/LPL"/>
</dbReference>
<dbReference type="InterPro" id="IPR004529">
    <property type="entry name" value="Phe-tRNA-synth_IIc_asu"/>
</dbReference>
<dbReference type="InterPro" id="IPR004188">
    <property type="entry name" value="Phe-tRNA_ligase_II_N"/>
</dbReference>
<dbReference type="InterPro" id="IPR022911">
    <property type="entry name" value="Phe_tRNA_ligase_alpha1_bac"/>
</dbReference>
<dbReference type="InterPro" id="IPR002319">
    <property type="entry name" value="Phenylalanyl-tRNA_Synthase"/>
</dbReference>
<dbReference type="InterPro" id="IPR010978">
    <property type="entry name" value="tRNA-bd_arm"/>
</dbReference>
<dbReference type="NCBIfam" id="TIGR00468">
    <property type="entry name" value="pheS"/>
    <property type="match status" value="1"/>
</dbReference>
<dbReference type="PANTHER" id="PTHR11538:SF41">
    <property type="entry name" value="PHENYLALANINE--TRNA LIGASE, MITOCHONDRIAL"/>
    <property type="match status" value="1"/>
</dbReference>
<dbReference type="PANTHER" id="PTHR11538">
    <property type="entry name" value="PHENYLALANYL-TRNA SYNTHETASE"/>
    <property type="match status" value="1"/>
</dbReference>
<dbReference type="Pfam" id="PF02912">
    <property type="entry name" value="Phe_tRNA-synt_N"/>
    <property type="match status" value="1"/>
</dbReference>
<dbReference type="Pfam" id="PF01409">
    <property type="entry name" value="tRNA-synt_2d"/>
    <property type="match status" value="1"/>
</dbReference>
<dbReference type="SUPFAM" id="SSF55681">
    <property type="entry name" value="Class II aaRS and biotin synthetases"/>
    <property type="match status" value="1"/>
</dbReference>
<dbReference type="SUPFAM" id="SSF46589">
    <property type="entry name" value="tRNA-binding arm"/>
    <property type="match status" value="1"/>
</dbReference>
<dbReference type="PROSITE" id="PS50862">
    <property type="entry name" value="AA_TRNA_LIGASE_II"/>
    <property type="match status" value="1"/>
</dbReference>
<accession>Q57PU9</accession>
<comment type="catalytic activity">
    <reaction evidence="1">
        <text>tRNA(Phe) + L-phenylalanine + ATP = L-phenylalanyl-tRNA(Phe) + AMP + diphosphate + H(+)</text>
        <dbReference type="Rhea" id="RHEA:19413"/>
        <dbReference type="Rhea" id="RHEA-COMP:9668"/>
        <dbReference type="Rhea" id="RHEA-COMP:9699"/>
        <dbReference type="ChEBI" id="CHEBI:15378"/>
        <dbReference type="ChEBI" id="CHEBI:30616"/>
        <dbReference type="ChEBI" id="CHEBI:33019"/>
        <dbReference type="ChEBI" id="CHEBI:58095"/>
        <dbReference type="ChEBI" id="CHEBI:78442"/>
        <dbReference type="ChEBI" id="CHEBI:78531"/>
        <dbReference type="ChEBI" id="CHEBI:456215"/>
        <dbReference type="EC" id="6.1.1.20"/>
    </reaction>
</comment>
<comment type="cofactor">
    <cofactor evidence="1">
        <name>Mg(2+)</name>
        <dbReference type="ChEBI" id="CHEBI:18420"/>
    </cofactor>
    <text evidence="1">Binds 2 magnesium ions per tetramer.</text>
</comment>
<comment type="subunit">
    <text evidence="1">Tetramer of two alpha and two beta subunits.</text>
</comment>
<comment type="subcellular location">
    <subcellularLocation>
        <location evidence="1">Cytoplasm</location>
    </subcellularLocation>
</comment>
<comment type="similarity">
    <text evidence="1">Belongs to the class-II aminoacyl-tRNA synthetase family. Phe-tRNA synthetase alpha subunit type 1 subfamily.</text>
</comment>
<reference key="1">
    <citation type="journal article" date="2005" name="Nucleic Acids Res.">
        <title>The genome sequence of Salmonella enterica serovar Choleraesuis, a highly invasive and resistant zoonotic pathogen.</title>
        <authorList>
            <person name="Chiu C.-H."/>
            <person name="Tang P."/>
            <person name="Chu C."/>
            <person name="Hu S."/>
            <person name="Bao Q."/>
            <person name="Yu J."/>
            <person name="Chou Y.-Y."/>
            <person name="Wang H.-S."/>
            <person name="Lee Y.-S."/>
        </authorList>
    </citation>
    <scope>NUCLEOTIDE SEQUENCE [LARGE SCALE GENOMIC DNA]</scope>
    <source>
        <strain>SC-B67</strain>
    </source>
</reference>
<gene>
    <name evidence="1" type="primary">pheS</name>
    <name type="ordered locus">SCH_1356</name>
</gene>
<evidence type="ECO:0000255" key="1">
    <source>
        <dbReference type="HAMAP-Rule" id="MF_00281"/>
    </source>
</evidence>
<protein>
    <recommendedName>
        <fullName evidence="1">Phenylalanine--tRNA ligase alpha subunit</fullName>
        <ecNumber evidence="1">6.1.1.20</ecNumber>
    </recommendedName>
    <alternativeName>
        <fullName evidence="1">Phenylalanyl-tRNA synthetase alpha subunit</fullName>
        <shortName evidence="1">PheRS</shortName>
    </alternativeName>
</protein>
<proteinExistence type="inferred from homology"/>
<feature type="chain" id="PRO_0000232022" description="Phenylalanine--tRNA ligase alpha subunit">
    <location>
        <begin position="1"/>
        <end position="327"/>
    </location>
</feature>
<feature type="binding site" evidence="1">
    <location>
        <position position="252"/>
    </location>
    <ligand>
        <name>Mg(2+)</name>
        <dbReference type="ChEBI" id="CHEBI:18420"/>
        <note>shared with beta subunit</note>
    </ligand>
</feature>